<keyword id="KW-0131">Cell cycle</keyword>
<keyword id="KW-0132">Cell division</keyword>
<keyword id="KW-0143">Chaperone</keyword>
<keyword id="KW-0963">Cytoplasm</keyword>
<keyword id="KW-0413">Isomerase</keyword>
<keyword id="KW-1185">Reference proteome</keyword>
<keyword id="KW-0697">Rotamase</keyword>
<evidence type="ECO:0000255" key="1">
    <source>
        <dbReference type="HAMAP-Rule" id="MF_00303"/>
    </source>
</evidence>
<protein>
    <recommendedName>
        <fullName evidence="1">Trigger factor</fullName>
        <shortName evidence="1">TF</shortName>
        <ecNumber evidence="1">5.2.1.8</ecNumber>
    </recommendedName>
    <alternativeName>
        <fullName evidence="1">PPIase</fullName>
    </alternativeName>
</protein>
<sequence length="428" mass="48361">MEAKMNKIDTNVVELEIKVDAKDFNEALKKSYNKNSKKFNIPGFRKGKVPMNMVKKFYGVEVLFDDAINACIDKTYGVALEENNVRPVDYPQIEVVEVGEGKDLVYKAKVTTYPEVTLGDYKGLEVEEVSYEVKEEDIEKQLADMQARNARVETKEEGTVENGNIAVIDFKGFIDDVAFEGGEGKDYPLEIGSGSFIDNFEEQLVGLKVGESKDVNVTFPEAYGKEDLNGKPAKFEVTVKEIKVKELPALDDEFAKEVSEFDTLEELKADLKEKAVKANELRAKREMEEKVINAVVDNAKVEIPEAMINREVENMVRDLEMRLGQQGLSLEQYYEFTGSTEDKMKSYMKENAERKVKTDLVMSAVTEAEAIEATEEELKAKAEEVAKMYSNGAETEKMVDLLLNAQRAALELDVKREKTLKMLFESLK</sequence>
<comment type="function">
    <text evidence="1">Involved in protein export. Acts as a chaperone by maintaining the newly synthesized protein in an open conformation. Functions as a peptidyl-prolyl cis-trans isomerase.</text>
</comment>
<comment type="catalytic activity">
    <reaction evidence="1">
        <text>[protein]-peptidylproline (omega=180) = [protein]-peptidylproline (omega=0)</text>
        <dbReference type="Rhea" id="RHEA:16237"/>
        <dbReference type="Rhea" id="RHEA-COMP:10747"/>
        <dbReference type="Rhea" id="RHEA-COMP:10748"/>
        <dbReference type="ChEBI" id="CHEBI:83833"/>
        <dbReference type="ChEBI" id="CHEBI:83834"/>
        <dbReference type="EC" id="5.2.1.8"/>
    </reaction>
</comment>
<comment type="subcellular location">
    <subcellularLocation>
        <location>Cytoplasm</location>
    </subcellularLocation>
    <text evidence="1">About half TF is bound to the ribosome near the polypeptide exit tunnel while the other half is free in the cytoplasm.</text>
</comment>
<comment type="domain">
    <text evidence="1">Consists of 3 domains; the N-terminus binds the ribosome, the middle domain has PPIase activity, while the C-terminus has intrinsic chaperone activity on its own.</text>
</comment>
<comment type="similarity">
    <text evidence="1">Belongs to the FKBP-type PPIase family. Tig subfamily.</text>
</comment>
<organism>
    <name type="scientific">Clostridium perfringens (strain 13 / Type A)</name>
    <dbReference type="NCBI Taxonomy" id="195102"/>
    <lineage>
        <taxon>Bacteria</taxon>
        <taxon>Bacillati</taxon>
        <taxon>Bacillota</taxon>
        <taxon>Clostridia</taxon>
        <taxon>Eubacteriales</taxon>
        <taxon>Clostridiaceae</taxon>
        <taxon>Clostridium</taxon>
    </lineage>
</organism>
<name>TIG_CLOPE</name>
<proteinExistence type="inferred from homology"/>
<feature type="chain" id="PRO_0000179338" description="Trigger factor">
    <location>
        <begin position="1"/>
        <end position="428"/>
    </location>
</feature>
<feature type="domain" description="PPIase FKBP-type" evidence="1">
    <location>
        <begin position="163"/>
        <end position="248"/>
    </location>
</feature>
<accession>Q8XKK0</accession>
<dbReference type="EC" id="5.2.1.8" evidence="1"/>
<dbReference type="EMBL" id="BA000016">
    <property type="protein sequence ID" value="BAB81100.1"/>
    <property type="molecule type" value="Genomic_DNA"/>
</dbReference>
<dbReference type="RefSeq" id="WP_003460760.1">
    <property type="nucleotide sequence ID" value="NC_003366.1"/>
</dbReference>
<dbReference type="SMR" id="Q8XKK0"/>
<dbReference type="STRING" id="195102.gene:10490658"/>
<dbReference type="GeneID" id="93002064"/>
<dbReference type="KEGG" id="cpe:CPE1394"/>
<dbReference type="HOGENOM" id="CLU_033058_3_2_9"/>
<dbReference type="Proteomes" id="UP000000818">
    <property type="component" value="Chromosome"/>
</dbReference>
<dbReference type="GO" id="GO:0005737">
    <property type="term" value="C:cytoplasm"/>
    <property type="evidence" value="ECO:0007669"/>
    <property type="project" value="UniProtKB-SubCell"/>
</dbReference>
<dbReference type="GO" id="GO:0003755">
    <property type="term" value="F:peptidyl-prolyl cis-trans isomerase activity"/>
    <property type="evidence" value="ECO:0007669"/>
    <property type="project" value="UniProtKB-UniRule"/>
</dbReference>
<dbReference type="GO" id="GO:0044183">
    <property type="term" value="F:protein folding chaperone"/>
    <property type="evidence" value="ECO:0007669"/>
    <property type="project" value="TreeGrafter"/>
</dbReference>
<dbReference type="GO" id="GO:0043022">
    <property type="term" value="F:ribosome binding"/>
    <property type="evidence" value="ECO:0007669"/>
    <property type="project" value="TreeGrafter"/>
</dbReference>
<dbReference type="GO" id="GO:0051083">
    <property type="term" value="P:'de novo' cotranslational protein folding"/>
    <property type="evidence" value="ECO:0007669"/>
    <property type="project" value="TreeGrafter"/>
</dbReference>
<dbReference type="GO" id="GO:0051301">
    <property type="term" value="P:cell division"/>
    <property type="evidence" value="ECO:0007669"/>
    <property type="project" value="UniProtKB-KW"/>
</dbReference>
<dbReference type="GO" id="GO:0061077">
    <property type="term" value="P:chaperone-mediated protein folding"/>
    <property type="evidence" value="ECO:0007669"/>
    <property type="project" value="TreeGrafter"/>
</dbReference>
<dbReference type="GO" id="GO:0015031">
    <property type="term" value="P:protein transport"/>
    <property type="evidence" value="ECO:0007669"/>
    <property type="project" value="UniProtKB-UniRule"/>
</dbReference>
<dbReference type="GO" id="GO:0043335">
    <property type="term" value="P:protein unfolding"/>
    <property type="evidence" value="ECO:0007669"/>
    <property type="project" value="TreeGrafter"/>
</dbReference>
<dbReference type="FunFam" id="3.10.50.40:FF:000001">
    <property type="entry name" value="Trigger factor"/>
    <property type="match status" value="1"/>
</dbReference>
<dbReference type="Gene3D" id="3.10.50.40">
    <property type="match status" value="1"/>
</dbReference>
<dbReference type="Gene3D" id="3.30.70.1050">
    <property type="entry name" value="Trigger factor ribosome-binding domain"/>
    <property type="match status" value="1"/>
</dbReference>
<dbReference type="Gene3D" id="1.10.3120.10">
    <property type="entry name" value="Trigger factor, C-terminal domain"/>
    <property type="match status" value="1"/>
</dbReference>
<dbReference type="HAMAP" id="MF_00303">
    <property type="entry name" value="Trigger_factor_Tig"/>
    <property type="match status" value="1"/>
</dbReference>
<dbReference type="InterPro" id="IPR046357">
    <property type="entry name" value="PPIase_dom_sf"/>
</dbReference>
<dbReference type="InterPro" id="IPR001179">
    <property type="entry name" value="PPIase_FKBP_dom"/>
</dbReference>
<dbReference type="InterPro" id="IPR005215">
    <property type="entry name" value="Trig_fac"/>
</dbReference>
<dbReference type="InterPro" id="IPR008880">
    <property type="entry name" value="Trigger_fac_C"/>
</dbReference>
<dbReference type="InterPro" id="IPR037041">
    <property type="entry name" value="Trigger_fac_C_sf"/>
</dbReference>
<dbReference type="InterPro" id="IPR008881">
    <property type="entry name" value="Trigger_fac_ribosome-bd_bac"/>
</dbReference>
<dbReference type="InterPro" id="IPR036611">
    <property type="entry name" value="Trigger_fac_ribosome-bd_sf"/>
</dbReference>
<dbReference type="InterPro" id="IPR027304">
    <property type="entry name" value="Trigger_fact/SurA_dom_sf"/>
</dbReference>
<dbReference type="NCBIfam" id="TIGR00115">
    <property type="entry name" value="tig"/>
    <property type="match status" value="1"/>
</dbReference>
<dbReference type="PANTHER" id="PTHR30560">
    <property type="entry name" value="TRIGGER FACTOR CHAPERONE AND PEPTIDYL-PROLYL CIS/TRANS ISOMERASE"/>
    <property type="match status" value="1"/>
</dbReference>
<dbReference type="PANTHER" id="PTHR30560:SF3">
    <property type="entry name" value="TRIGGER FACTOR-LIKE PROTEIN TIG, CHLOROPLASTIC"/>
    <property type="match status" value="1"/>
</dbReference>
<dbReference type="Pfam" id="PF00254">
    <property type="entry name" value="FKBP_C"/>
    <property type="match status" value="1"/>
</dbReference>
<dbReference type="Pfam" id="PF05698">
    <property type="entry name" value="Trigger_C"/>
    <property type="match status" value="1"/>
</dbReference>
<dbReference type="Pfam" id="PF05697">
    <property type="entry name" value="Trigger_N"/>
    <property type="match status" value="1"/>
</dbReference>
<dbReference type="PIRSF" id="PIRSF003095">
    <property type="entry name" value="Trigger_factor"/>
    <property type="match status" value="1"/>
</dbReference>
<dbReference type="SUPFAM" id="SSF54534">
    <property type="entry name" value="FKBP-like"/>
    <property type="match status" value="1"/>
</dbReference>
<dbReference type="SUPFAM" id="SSF109998">
    <property type="entry name" value="Triger factor/SurA peptide-binding domain-like"/>
    <property type="match status" value="1"/>
</dbReference>
<dbReference type="SUPFAM" id="SSF102735">
    <property type="entry name" value="Trigger factor ribosome-binding domain"/>
    <property type="match status" value="1"/>
</dbReference>
<dbReference type="PROSITE" id="PS50059">
    <property type="entry name" value="FKBP_PPIASE"/>
    <property type="match status" value="1"/>
</dbReference>
<gene>
    <name evidence="1" type="primary">tig</name>
    <name type="ordered locus">CPE1394</name>
</gene>
<reference key="1">
    <citation type="journal article" date="2002" name="Proc. Natl. Acad. Sci. U.S.A.">
        <title>Complete genome sequence of Clostridium perfringens, an anaerobic flesh-eater.</title>
        <authorList>
            <person name="Shimizu T."/>
            <person name="Ohtani K."/>
            <person name="Hirakawa H."/>
            <person name="Ohshima K."/>
            <person name="Yamashita A."/>
            <person name="Shiba T."/>
            <person name="Ogasawara N."/>
            <person name="Hattori M."/>
            <person name="Kuhara S."/>
            <person name="Hayashi H."/>
        </authorList>
    </citation>
    <scope>NUCLEOTIDE SEQUENCE [LARGE SCALE GENOMIC DNA]</scope>
    <source>
        <strain>13 / Type A</strain>
    </source>
</reference>